<gene>
    <name type="primary">ZNHIT1</name>
    <name type="synonym">CGBP1</name>
    <name type="synonym">ZNFN4A1</name>
</gene>
<evidence type="ECO:0000250" key="1">
    <source>
        <dbReference type="UniProtKB" id="Q8R331"/>
    </source>
</evidence>
<evidence type="ECO:0000255" key="2"/>
<evidence type="ECO:0000255" key="3">
    <source>
        <dbReference type="PROSITE-ProRule" id="PRU00453"/>
    </source>
</evidence>
<evidence type="ECO:0000256" key="4">
    <source>
        <dbReference type="SAM" id="MobiDB-lite"/>
    </source>
</evidence>
<evidence type="ECO:0000269" key="5">
    <source>
    </source>
</evidence>
<evidence type="ECO:0000269" key="6">
    <source>
    </source>
</evidence>
<evidence type="ECO:0000269" key="7">
    <source>
    </source>
</evidence>
<evidence type="ECO:0000269" key="8">
    <source>
    </source>
</evidence>
<evidence type="ECO:0000269" key="9">
    <source>
    </source>
</evidence>
<evidence type="ECO:0000269" key="10">
    <source>
    </source>
</evidence>
<evidence type="ECO:0000269" key="11">
    <source>
    </source>
</evidence>
<evidence type="ECO:0000269" key="12">
    <source>
    </source>
</evidence>
<evidence type="ECO:0000303" key="13">
    <source>
    </source>
</evidence>
<evidence type="ECO:0000305" key="14"/>
<feature type="chain" id="PRO_0000173546" description="Zinc finger HIT domain-containing protein 1">
    <location>
        <begin position="1"/>
        <end position="154"/>
    </location>
</feature>
<feature type="zinc finger region" description="HIT-type" evidence="3">
    <location>
        <begin position="117"/>
        <end position="149"/>
    </location>
</feature>
<feature type="region of interest" description="Disordered" evidence="4">
    <location>
        <begin position="1"/>
        <end position="72"/>
    </location>
</feature>
<feature type="region of interest" description="Interaction with NR1D2" evidence="9">
    <location>
        <begin position="72"/>
        <end position="110"/>
    </location>
</feature>
<feature type="coiled-coil region" evidence="2">
    <location>
        <begin position="23"/>
        <end position="39"/>
    </location>
</feature>
<feature type="short sequence motif" description="Nuclear localization signal" evidence="9">
    <location>
        <begin position="38"/>
        <end position="47"/>
    </location>
</feature>
<feature type="compositionally biased region" description="Basic and acidic residues" evidence="4">
    <location>
        <begin position="14"/>
        <end position="23"/>
    </location>
</feature>
<feature type="binding site" evidence="3">
    <location>
        <position position="117"/>
    </location>
    <ligand>
        <name>Zn(2+)</name>
        <dbReference type="ChEBI" id="CHEBI:29105"/>
        <label>1</label>
    </ligand>
</feature>
<feature type="binding site" evidence="3">
    <location>
        <position position="120"/>
    </location>
    <ligand>
        <name>Zn(2+)</name>
        <dbReference type="ChEBI" id="CHEBI:29105"/>
        <label>1</label>
    </ligand>
</feature>
<feature type="binding site" evidence="3">
    <location>
        <position position="128"/>
    </location>
    <ligand>
        <name>Zn(2+)</name>
        <dbReference type="ChEBI" id="CHEBI:29105"/>
        <label>2</label>
    </ligand>
</feature>
<feature type="binding site" evidence="3">
    <location>
        <position position="131"/>
    </location>
    <ligand>
        <name>Zn(2+)</name>
        <dbReference type="ChEBI" id="CHEBI:29105"/>
        <label>2</label>
    </ligand>
</feature>
<feature type="binding site" evidence="3">
    <location>
        <position position="136"/>
    </location>
    <ligand>
        <name>Zn(2+)</name>
        <dbReference type="ChEBI" id="CHEBI:29105"/>
        <label>1</label>
    </ligand>
</feature>
<feature type="binding site" evidence="3">
    <location>
        <position position="140"/>
    </location>
    <ligand>
        <name>Zn(2+)</name>
        <dbReference type="ChEBI" id="CHEBI:29105"/>
        <label>1</label>
    </ligand>
</feature>
<feature type="binding site" evidence="3">
    <location>
        <position position="144"/>
    </location>
    <ligand>
        <name>Zn(2+)</name>
        <dbReference type="ChEBI" id="CHEBI:29105"/>
        <label>2</label>
    </ligand>
</feature>
<feature type="binding site" evidence="3">
    <location>
        <position position="149"/>
    </location>
    <ligand>
        <name>Zn(2+)</name>
        <dbReference type="ChEBI" id="CHEBI:29105"/>
        <label>2</label>
    </ligand>
</feature>
<feature type="modified residue" description="Phosphothreonine; by MAPK11 and MAPK14" evidence="7">
    <location>
        <position position="103"/>
    </location>
</feature>
<feature type="sequence variant" id="VAR_035719" description="In a colorectal cancer sample; somatic mutation; dbSNP:rs369664812." evidence="6">
    <original>R</original>
    <variation>W</variation>
    <location>
        <position position="134"/>
    </location>
</feature>
<feature type="mutagenesis site" description="Impairs the p38 MAPK-mediated phosphorylation of ZNHIT1." evidence="7">
    <original>T</original>
    <variation>A</variation>
    <location>
        <position position="103"/>
    </location>
</feature>
<feature type="mutagenesis site" description="No change in the in vitro MAPK14/MAPK11-induced phosphorylation level of ZNHIT1.">
    <original>S</original>
    <variation>A</variation>
    <location>
        <position position="124"/>
    </location>
</feature>
<dbReference type="EMBL" id="AF093571">
    <property type="protein sequence ID" value="AAF03558.1"/>
    <property type="molecule type" value="mRNA"/>
</dbReference>
<dbReference type="EMBL" id="U61837">
    <property type="protein sequence ID" value="AAB88578.1"/>
    <property type="molecule type" value="mRNA"/>
</dbReference>
<dbReference type="EMBL" id="CR456992">
    <property type="protein sequence ID" value="CAG33273.1"/>
    <property type="molecule type" value="mRNA"/>
</dbReference>
<dbReference type="EMBL" id="AC004876">
    <property type="protein sequence ID" value="AAD45833.1"/>
    <property type="molecule type" value="Genomic_DNA"/>
</dbReference>
<dbReference type="EMBL" id="CH471197">
    <property type="protein sequence ID" value="EAW50209.1"/>
    <property type="molecule type" value="Genomic_DNA"/>
</dbReference>
<dbReference type="EMBL" id="BC017333">
    <property type="protein sequence ID" value="AAH17333.1"/>
    <property type="molecule type" value="mRNA"/>
</dbReference>
<dbReference type="CCDS" id="CCDS5716.1"/>
<dbReference type="RefSeq" id="NP_006340.1">
    <property type="nucleotide sequence ID" value="NM_006349.3"/>
</dbReference>
<dbReference type="PDB" id="8X15">
    <property type="method" value="EM"/>
    <property type="resolution" value="3.20 A"/>
    <property type="chains" value="L=1-154"/>
</dbReference>
<dbReference type="PDB" id="8X19">
    <property type="method" value="EM"/>
    <property type="resolution" value="3.20 A"/>
    <property type="chains" value="L=1-154"/>
</dbReference>
<dbReference type="PDB" id="8X1C">
    <property type="method" value="EM"/>
    <property type="resolution" value="3.20 A"/>
    <property type="chains" value="L=1-154"/>
</dbReference>
<dbReference type="PDBsum" id="8X15"/>
<dbReference type="PDBsum" id="8X19"/>
<dbReference type="PDBsum" id="8X1C"/>
<dbReference type="EMDB" id="EMD-37984"/>
<dbReference type="EMDB" id="EMD-37988"/>
<dbReference type="EMDB" id="EMD-37990"/>
<dbReference type="SMR" id="O43257"/>
<dbReference type="BioGRID" id="115730">
    <property type="interactions" value="62"/>
</dbReference>
<dbReference type="ComplexPortal" id="CPX-974">
    <property type="entry name" value="SRCAP chromatin remodeling complex"/>
</dbReference>
<dbReference type="CORUM" id="O43257"/>
<dbReference type="FunCoup" id="O43257">
    <property type="interactions" value="1919"/>
</dbReference>
<dbReference type="IntAct" id="O43257">
    <property type="interactions" value="61"/>
</dbReference>
<dbReference type="MINT" id="O43257"/>
<dbReference type="STRING" id="9606.ENSP00000304593"/>
<dbReference type="iPTMnet" id="O43257"/>
<dbReference type="PhosphoSitePlus" id="O43257"/>
<dbReference type="BioMuta" id="ZNHIT1"/>
<dbReference type="jPOST" id="O43257"/>
<dbReference type="MassIVE" id="O43257"/>
<dbReference type="PaxDb" id="9606-ENSP00000304593"/>
<dbReference type="PeptideAtlas" id="O43257"/>
<dbReference type="ProteomicsDB" id="48839"/>
<dbReference type="Pumba" id="O43257"/>
<dbReference type="Antibodypedia" id="16743">
    <property type="antibodies" value="131 antibodies from 28 providers"/>
</dbReference>
<dbReference type="DNASU" id="10467"/>
<dbReference type="Ensembl" id="ENST00000305105.3">
    <property type="protein sequence ID" value="ENSP00000304593.2"/>
    <property type="gene ID" value="ENSG00000106400.12"/>
</dbReference>
<dbReference type="GeneID" id="10467"/>
<dbReference type="KEGG" id="hsa:10467"/>
<dbReference type="MANE-Select" id="ENST00000305105.3">
    <property type="protein sequence ID" value="ENSP00000304593.2"/>
    <property type="RefSeq nucleotide sequence ID" value="NM_006349.3"/>
    <property type="RefSeq protein sequence ID" value="NP_006340.1"/>
</dbReference>
<dbReference type="UCSC" id="uc003uye.4">
    <property type="organism name" value="human"/>
</dbReference>
<dbReference type="AGR" id="HGNC:21688"/>
<dbReference type="CTD" id="10467"/>
<dbReference type="DisGeNET" id="10467"/>
<dbReference type="GeneCards" id="ZNHIT1"/>
<dbReference type="HGNC" id="HGNC:21688">
    <property type="gene designation" value="ZNHIT1"/>
</dbReference>
<dbReference type="HPA" id="ENSG00000106400">
    <property type="expression patterns" value="Low tissue specificity"/>
</dbReference>
<dbReference type="MIM" id="618617">
    <property type="type" value="gene"/>
</dbReference>
<dbReference type="neXtProt" id="NX_O43257"/>
<dbReference type="OpenTargets" id="ENSG00000106400"/>
<dbReference type="PharmGKB" id="PA134947251"/>
<dbReference type="VEuPathDB" id="HostDB:ENSG00000106400"/>
<dbReference type="eggNOG" id="KOG3362">
    <property type="taxonomic scope" value="Eukaryota"/>
</dbReference>
<dbReference type="GeneTree" id="ENSGT00390000018426"/>
<dbReference type="HOGENOM" id="CLU_106918_2_1_1"/>
<dbReference type="InParanoid" id="O43257"/>
<dbReference type="OMA" id="CIPCGAR"/>
<dbReference type="OrthoDB" id="74807at2759"/>
<dbReference type="PAN-GO" id="O43257">
    <property type="GO annotations" value="3 GO annotations based on evolutionary models"/>
</dbReference>
<dbReference type="PhylomeDB" id="O43257"/>
<dbReference type="TreeFam" id="TF314330"/>
<dbReference type="PathwayCommons" id="O43257"/>
<dbReference type="SignaLink" id="O43257"/>
<dbReference type="SIGNOR" id="O43257"/>
<dbReference type="BioGRID-ORCS" id="10467">
    <property type="hits" value="171 hits in 1175 CRISPR screens"/>
</dbReference>
<dbReference type="ChiTaRS" id="ZNHIT1">
    <property type="organism name" value="human"/>
</dbReference>
<dbReference type="GenomeRNAi" id="10467"/>
<dbReference type="Pharos" id="O43257">
    <property type="development level" value="Tbio"/>
</dbReference>
<dbReference type="PRO" id="PR:O43257"/>
<dbReference type="Proteomes" id="UP000005640">
    <property type="component" value="Chromosome 7"/>
</dbReference>
<dbReference type="RNAct" id="O43257">
    <property type="molecule type" value="protein"/>
</dbReference>
<dbReference type="Bgee" id="ENSG00000106400">
    <property type="expression patterns" value="Expressed in right lobe of liver and 201 other cell types or tissues"/>
</dbReference>
<dbReference type="GO" id="GO:0005654">
    <property type="term" value="C:nucleoplasm"/>
    <property type="evidence" value="ECO:0000314"/>
    <property type="project" value="HPA"/>
</dbReference>
<dbReference type="GO" id="GO:0000786">
    <property type="term" value="C:nucleosome"/>
    <property type="evidence" value="ECO:0000303"/>
    <property type="project" value="ComplexPortal"/>
</dbReference>
<dbReference type="GO" id="GO:0005634">
    <property type="term" value="C:nucleus"/>
    <property type="evidence" value="ECO:0000314"/>
    <property type="project" value="UniProtKB"/>
</dbReference>
<dbReference type="GO" id="GO:0000812">
    <property type="term" value="C:Swr1 complex"/>
    <property type="evidence" value="ECO:0000318"/>
    <property type="project" value="GO_Central"/>
</dbReference>
<dbReference type="GO" id="GO:0042393">
    <property type="term" value="F:histone binding"/>
    <property type="evidence" value="ECO:0000353"/>
    <property type="project" value="UniProtKB"/>
</dbReference>
<dbReference type="GO" id="GO:0042826">
    <property type="term" value="F:histone deacetylase binding"/>
    <property type="evidence" value="ECO:0007669"/>
    <property type="project" value="Ensembl"/>
</dbReference>
<dbReference type="GO" id="GO:0031491">
    <property type="term" value="F:nucleosome binding"/>
    <property type="evidence" value="ECO:0000318"/>
    <property type="project" value="GO_Central"/>
</dbReference>
<dbReference type="GO" id="GO:0008270">
    <property type="term" value="F:zinc ion binding"/>
    <property type="evidence" value="ECO:0007669"/>
    <property type="project" value="UniProtKB-KW"/>
</dbReference>
<dbReference type="GO" id="GO:0055074">
    <property type="term" value="P:calcium ion homeostasis"/>
    <property type="evidence" value="ECO:0000250"/>
    <property type="project" value="UniProtKB"/>
</dbReference>
<dbReference type="GO" id="GO:0006338">
    <property type="term" value="P:chromatin remodeling"/>
    <property type="evidence" value="ECO:0000250"/>
    <property type="project" value="UniProtKB"/>
</dbReference>
<dbReference type="GO" id="GO:0003015">
    <property type="term" value="P:heart process"/>
    <property type="evidence" value="ECO:0000250"/>
    <property type="project" value="UniProtKB"/>
</dbReference>
<dbReference type="GO" id="GO:0061484">
    <property type="term" value="P:hematopoietic stem cell homeostasis"/>
    <property type="evidence" value="ECO:0007669"/>
    <property type="project" value="Ensembl"/>
</dbReference>
<dbReference type="GO" id="GO:0036335">
    <property type="term" value="P:intestinal stem cell homeostasis"/>
    <property type="evidence" value="ECO:0000250"/>
    <property type="project" value="UniProtKB"/>
</dbReference>
<dbReference type="GO" id="GO:0042692">
    <property type="term" value="P:muscle cell differentiation"/>
    <property type="evidence" value="ECO:0000315"/>
    <property type="project" value="UniProtKB"/>
</dbReference>
<dbReference type="GO" id="GO:0070317">
    <property type="term" value="P:negative regulation of G0 to G1 transition"/>
    <property type="evidence" value="ECO:0007669"/>
    <property type="project" value="Ensembl"/>
</dbReference>
<dbReference type="GO" id="GO:0000122">
    <property type="term" value="P:negative regulation of transcription by RNA polymerase II"/>
    <property type="evidence" value="ECO:0007669"/>
    <property type="project" value="Ensembl"/>
</dbReference>
<dbReference type="GO" id="GO:0043517">
    <property type="term" value="P:positive regulation of DNA damage response, signal transduction by p53 class mediator"/>
    <property type="evidence" value="ECO:0000314"/>
    <property type="project" value="UniProtKB"/>
</dbReference>
<dbReference type="GO" id="GO:1905458">
    <property type="term" value="P:positive regulation of lymphoid progenitor cell differentiation"/>
    <property type="evidence" value="ECO:0000250"/>
    <property type="project" value="UniProtKB"/>
</dbReference>
<dbReference type="GO" id="GO:0060261">
    <property type="term" value="P:positive regulation of transcription initiation by RNA polymerase II"/>
    <property type="evidence" value="ECO:0000250"/>
    <property type="project" value="UniProtKB"/>
</dbReference>
<dbReference type="GO" id="GO:0006355">
    <property type="term" value="P:regulation of DNA-templated transcription"/>
    <property type="evidence" value="ECO:0000303"/>
    <property type="project" value="ComplexPortal"/>
</dbReference>
<dbReference type="GO" id="GO:0042129">
    <property type="term" value="P:regulation of T cell proliferation"/>
    <property type="evidence" value="ECO:0007669"/>
    <property type="project" value="Ensembl"/>
</dbReference>
<dbReference type="GO" id="GO:0045815">
    <property type="term" value="P:transcription initiation-coupled chromatin remodeling"/>
    <property type="evidence" value="ECO:0007669"/>
    <property type="project" value="Ensembl"/>
</dbReference>
<dbReference type="CDD" id="cd21437">
    <property type="entry name" value="zf-HIT_ZNHIT1_like"/>
    <property type="match status" value="1"/>
</dbReference>
<dbReference type="Gene3D" id="3.30.60.190">
    <property type="match status" value="1"/>
</dbReference>
<dbReference type="InterPro" id="IPR039723">
    <property type="entry name" value="Vps71/ZNHIT1"/>
</dbReference>
<dbReference type="InterPro" id="IPR007529">
    <property type="entry name" value="Znf_HIT"/>
</dbReference>
<dbReference type="PANTHER" id="PTHR13093">
    <property type="entry name" value="ZINC FINGER HIT DOMAIN CONTAINING PROTEIN 1"/>
    <property type="match status" value="1"/>
</dbReference>
<dbReference type="Pfam" id="PF04438">
    <property type="entry name" value="zf-HIT"/>
    <property type="match status" value="1"/>
</dbReference>
<dbReference type="SUPFAM" id="SSF144232">
    <property type="entry name" value="HIT/MYND zinc finger-like"/>
    <property type="match status" value="1"/>
</dbReference>
<dbReference type="PROSITE" id="PS51083">
    <property type="entry name" value="ZF_HIT"/>
    <property type="match status" value="1"/>
</dbReference>
<name>ZNHI1_HUMAN</name>
<keyword id="KW-0002">3D-structure</keyword>
<keyword id="KW-0156">Chromatin regulator</keyword>
<keyword id="KW-0175">Coiled coil</keyword>
<keyword id="KW-0479">Metal-binding</keyword>
<keyword id="KW-0539">Nucleus</keyword>
<keyword id="KW-0597">Phosphoprotein</keyword>
<keyword id="KW-1267">Proteomics identification</keyword>
<keyword id="KW-1185">Reference proteome</keyword>
<keyword id="KW-0862">Zinc</keyword>
<keyword id="KW-0863">Zinc-finger</keyword>
<accession>O43257</accession>
<accession>Q6IB12</accession>
<comment type="function">
    <text evidence="1 7 8 9 10 12">Plays a role in chromatin remodeling by promoting the incorporation of histone variant H2AZ1/H2A.Z into the genome to regulate gene expression (PubMed:20473270, PubMed:35175558). Promotes SRCAP complex-mediated deposition of histone variant H2AZ1 to lymphoid fate regulator genes, enhancing lymphoid lineage commitment (By similarity). Recruited to the promoter of the transcriptional activator MYOG at the early stages of muscle differentiation where it mediates binding of histone H2AZ1 to chromatin and induces muscle-specific gene expression (PubMed:20473270). Maintains hematopoietic stem cell (HSC) quiescence by determining the chromatin accessibility at distal enhancers of HSC quiescence genes such as PTEN, FSTL1 and KLF4, enhancing deposition of H2AZ1 to promote their sustained transcription and restricting PI3K-AKT signaling inhibition (By similarity). Plays a role in intestinal stem cell maintenance by promoting H2AZ1 deposition at the transcription start sites of genes involved in intestinal stem cell fate determination including LGR5, TGFB1 and TGFBR2, thereby contributing to gene transcription (By similarity). Promotes phosphorylation of the H2AZ1 chaperone VPS72/YL1 which enhances the interaction between HZAZ1 and VPS72 (By similarity). Regulates the entry of male germ cells into meiosis by controlling histone H2AZ1 deposition which facilitates the expression of meiotic genes such as MEIOSIN, leading to the initiation of meiosis (By similarity). Required for postnatal heart function through its role in maintenance of cardiac Ca(2+) homeostasis by modulating the expression of Ca(2+)-regulating proteins CASQ1 and ATP2A2/SERCA2A via deposition of histone H2AZ1 at their promoters (By similarity). During embryonic heart development, required for mitochondrial maturation and oxidative metabolism by functioning through H2AZ1 deposition to activate transcription of metabolic genes and is also required to maintain the stability of the respiratory complex (By similarity). In neural cells, increases deposition of the H2AZ1 histone variant and promotes neurite growth (PubMed:35175558). Plays a role in TP53/p53-mediated apoptosis induction by stimulating the transcriptional activation of several proapoptotic p53 target genes such as PMAIP1/NOXA and BBC3/PUMA (PubMed:17380123). Mediates cell cycle arrest induced in response to gamma-irradiation by enhancing recruitment of TP53/p53 to the promoter of the cell cycle inhibitor CDKN1A, leading to its transcriptional activation (PubMed:17700068). Recruited to the promoter of cyclin-dependent kinase CDK6 and inhibits its transcription, possibly by decreasing the acetylation level of histone H4, leading to cell cycle arrest at the G1 phase (By similarity). Plays a role in lens fiber cell differentiation by regulating the expression of cell cycle regulator CDKN1A/p21Cip1 (By similarity). Binds to transcriptional repressor NR1D2 and relieves it of its inhibitory effect on the transcription of apolipoprotein APOC3 without affecting its DNA-binding activity (PubMed:17892483).</text>
</comment>
<comment type="subunit">
    <text evidence="1 5 7 9 10 11">Component of the chromatin-remodeling SRCAP complex composed of at least SRCAP, DMAP1, RUVBL1, RUVBL2, ACTL6A, YEATS4, ACTR6 and ZNHIT1 (PubMed:15647280, PubMed:20473270). Interacts with MAPK11 and MAPK14 (PubMed:17380123). Interacts with NR1D1 and NR2D2 (PubMed:17892483). Interacts (via HIT-type zinc finger) with the RUVBL1/RUVBL2 complex in the presence of ADP (PubMed:28561026). Interacts with histone deacetylase HDAC1 (By similarity). Interacts with histone H2AZ1; the interaction results in recruitment of H2AZ1 to the MYOG promoter region (PubMed:20473270). Interacts with PCID2; the interaction results in inhibition of SRCAP complex activity, preventing the deposition of histone variant H2AZ1 to lymphoid fate regulator genes and restricting lymphoid lineage commitment (By similarity).</text>
</comment>
<comment type="interaction">
    <interactant intactId="EBI-347522">
        <id>O43257</id>
    </interactant>
    <interactant intactId="EBI-769329">
        <id>Q9GZN1</id>
        <label>ACTR6</label>
    </interactant>
    <organismsDiffer>false</organismsDiffer>
    <experiments>7</experiments>
</comment>
<comment type="interaction">
    <interactant intactId="EBI-347522">
        <id>O43257</id>
    </interactant>
    <interactant intactId="EBI-21535880">
        <id>Q92870-2</id>
        <label>APBB2</label>
    </interactant>
    <organismsDiffer>false</organismsDiffer>
    <experiments>3</experiments>
</comment>
<comment type="interaction">
    <interactant intactId="EBI-347522">
        <id>O43257</id>
    </interactant>
    <interactant intactId="EBI-765407">
        <id>P41182</id>
        <label>BCL6</label>
    </interactant>
    <organismsDiffer>false</organismsDiffer>
    <experiments>3</experiments>
</comment>
<comment type="interaction">
    <interactant intactId="EBI-347522">
        <id>O43257</id>
    </interactant>
    <interactant intactId="EBI-2837444">
        <id>Q8WUW1</id>
        <label>BRK1</label>
    </interactant>
    <organismsDiffer>false</organismsDiffer>
    <experiments>3</experiments>
</comment>
<comment type="interaction">
    <interactant intactId="EBI-347522">
        <id>O43257</id>
    </interactant>
    <interactant intactId="EBI-747133">
        <id>P27658</id>
        <label>COL8A1</label>
    </interactant>
    <organismsDiffer>false</organismsDiffer>
    <experiments>3</experiments>
</comment>
<comment type="interaction">
    <interactant intactId="EBI-347522">
        <id>O43257</id>
    </interactant>
    <interactant intactId="EBI-3867333">
        <id>A8MQ03</id>
        <label>CYSRT1</label>
    </interactant>
    <organismsDiffer>false</organismsDiffer>
    <experiments>3</experiments>
</comment>
<comment type="interaction">
    <interactant intactId="EBI-347522">
        <id>O43257</id>
    </interactant>
    <interactant intactId="EBI-6896746">
        <id>O00429-3</id>
        <label>DNM1L</label>
    </interactant>
    <organismsDiffer>false</organismsDiffer>
    <experiments>3</experiments>
</comment>
<comment type="interaction">
    <interactant intactId="EBI-347522">
        <id>O43257</id>
    </interactant>
    <interactant intactId="EBI-5280572">
        <id>P29692-2</id>
        <label>EEF1D</label>
    </interactant>
    <organismsDiffer>false</organismsDiffer>
    <experiments>3</experiments>
</comment>
<comment type="interaction">
    <interactant intactId="EBI-347522">
        <id>O43257</id>
    </interactant>
    <interactant intactId="EBI-750641">
        <id>Q5TD97</id>
        <label>FHL5</label>
    </interactant>
    <organismsDiffer>false</organismsDiffer>
    <experiments>3</experiments>
</comment>
<comment type="interaction">
    <interactant intactId="EBI-347522">
        <id>O43257</id>
    </interactant>
    <interactant intactId="EBI-25856644">
        <id>Q06787-7</id>
        <label>FMR1</label>
    </interactant>
    <organismsDiffer>false</organismsDiffer>
    <experiments>3</experiments>
</comment>
<comment type="interaction">
    <interactant intactId="EBI-347522">
        <id>O43257</id>
    </interactant>
    <interactant intactId="EBI-5916454">
        <id>A6NEM1</id>
        <label>GOLGA6L9</label>
    </interactant>
    <organismsDiffer>false</organismsDiffer>
    <experiments>3</experiments>
</comment>
<comment type="interaction">
    <interactant intactId="EBI-347522">
        <id>O43257</id>
    </interactant>
    <interactant intactId="EBI-1199859">
        <id>P0C0S5</id>
        <label>H2AZ1</label>
    </interactant>
    <organismsDiffer>false</organismsDiffer>
    <experiments>9</experiments>
</comment>
<comment type="interaction">
    <interactant intactId="EBI-347522">
        <id>O43257</id>
    </interactant>
    <interactant intactId="EBI-2556193">
        <id>Q63ZY3</id>
        <label>KANK2</label>
    </interactant>
    <organismsDiffer>false</organismsDiffer>
    <experiments>3</experiments>
</comment>
<comment type="interaction">
    <interactant intactId="EBI-347522">
        <id>O43257</id>
    </interactant>
    <interactant intactId="EBI-12012928">
        <id>P60371</id>
        <label>KRTAP10-6</label>
    </interactant>
    <organismsDiffer>false</organismsDiffer>
    <experiments>3</experiments>
</comment>
<comment type="interaction">
    <interactant intactId="EBI-347522">
        <id>O43257</id>
    </interactant>
    <interactant intactId="EBI-10172290">
        <id>P60409</id>
        <label>KRTAP10-7</label>
    </interactant>
    <organismsDiffer>false</organismsDiffer>
    <experiments>3</experiments>
</comment>
<comment type="interaction">
    <interactant intactId="EBI-347522">
        <id>O43257</id>
    </interactant>
    <interactant intactId="EBI-10176379">
        <id>P59991</id>
        <label>KRTAP12-2</label>
    </interactant>
    <organismsDiffer>false</organismsDiffer>
    <experiments>3</experiments>
</comment>
<comment type="interaction">
    <interactant intactId="EBI-347522">
        <id>O43257</id>
    </interactant>
    <interactant intactId="EBI-298304">
        <id>Q15759</id>
        <label>MAPK11</label>
    </interactant>
    <organismsDiffer>false</organismsDiffer>
    <experiments>2</experiments>
</comment>
<comment type="interaction">
    <interactant intactId="EBI-347522">
        <id>O43257</id>
    </interactant>
    <interactant intactId="EBI-73946">
        <id>Q16539</id>
        <label>MAPK14</label>
    </interactant>
    <organismsDiffer>false</organismsDiffer>
    <experiments>7</experiments>
</comment>
<comment type="interaction">
    <interactant intactId="EBI-347522">
        <id>O43257</id>
    </interactant>
    <interactant intactId="EBI-713568">
        <id>P45984</id>
        <label>MAPK9</label>
    </interactant>
    <organismsDiffer>false</organismsDiffer>
    <experiments>3</experiments>
</comment>
<comment type="interaction">
    <interactant intactId="EBI-347522">
        <id>O43257</id>
    </interactant>
    <interactant intactId="EBI-724076">
        <id>Q99750</id>
        <label>MDFI</label>
    </interactant>
    <organismsDiffer>false</organismsDiffer>
    <experiments>3</experiments>
</comment>
<comment type="interaction">
    <interactant intactId="EBI-347522">
        <id>O43257</id>
    </interactant>
    <interactant intactId="EBI-14093244">
        <id>Q9ULV0-2</id>
        <label>MYO5B</label>
    </interactant>
    <organismsDiffer>false</organismsDiffer>
    <experiments>3</experiments>
</comment>
<comment type="interaction">
    <interactant intactId="EBI-347522">
        <id>O43257</id>
    </interactant>
    <interactant intactId="EBI-9087860">
        <id>P32243-2</id>
        <label>OTX2</label>
    </interactant>
    <organismsDiffer>false</organismsDiffer>
    <experiments>3</experiments>
</comment>
<comment type="interaction">
    <interactant intactId="EBI-347522">
        <id>O43257</id>
    </interactant>
    <interactant intactId="EBI-50433196">
        <id>A0A6Q8PF08</id>
        <label>PMP22</label>
    </interactant>
    <organismsDiffer>false</organismsDiffer>
    <experiments>3</experiments>
</comment>
<comment type="interaction">
    <interactant intactId="EBI-347522">
        <id>O43257</id>
    </interactant>
    <interactant intactId="EBI-357849">
        <id>Q15025</id>
        <label>TNIP1</label>
    </interactant>
    <organismsDiffer>false</organismsDiffer>
    <experiments>3</experiments>
</comment>
<comment type="interaction">
    <interactant intactId="EBI-347522">
        <id>O43257</id>
    </interactant>
    <interactant intactId="EBI-396540">
        <id>Q12888</id>
        <label>TP53BP1</label>
    </interactant>
    <organismsDiffer>false</organismsDiffer>
    <experiments>2</experiments>
</comment>
<comment type="subcellular location">
    <subcellularLocation>
        <location evidence="9">Nucleus</location>
    </subcellularLocation>
</comment>
<comment type="tissue specificity">
    <text evidence="9">Expressed abundantly in liver, but weakly in skeletal muscle, ovary and small intestine.</text>
</comment>
<comment type="induction">
    <text evidence="7">Induced by DNA damage.</text>
</comment>
<comment type="PTM">
    <text evidence="7 10">Phosphorylated on Thr by MAPK11 or MAPK14 (PubMed:17380123). Phosphorylation is required for MYOG induction, for deposition of histone H2AZ1 at the MYOG promoter and for SRCAP complex integrity (PubMed:20473270).</text>
</comment>
<comment type="similarity">
    <text evidence="14">Belongs to the ZNHIT1 family.</text>
</comment>
<reference key="1">
    <citation type="submission" date="1998-09" db="EMBL/GenBank/DDBJ databases">
        <title>Molecular cloning and characterization of cyclin G1 binding protein 1 (CGBP1).</title>
        <authorList>
            <person name="Wang Y."/>
            <person name="Underwood L.J."/>
            <person name="Tanimoto H."/>
            <person name="Shigemasa K."/>
            <person name="O'Brien T.J."/>
        </authorList>
    </citation>
    <scope>NUCLEOTIDE SEQUENCE [MRNA]</scope>
</reference>
<reference key="2">
    <citation type="submission" date="1997-06" db="EMBL/GenBank/DDBJ databases">
        <authorList>
            <person name="Xu F."/>
            <person name="Hall F.L."/>
            <person name="Starnes V."/>
            <person name="Wu L."/>
        </authorList>
    </citation>
    <scope>NUCLEOTIDE SEQUENCE [MRNA]</scope>
</reference>
<reference key="3">
    <citation type="submission" date="2004-06" db="EMBL/GenBank/DDBJ databases">
        <title>Cloning of human full open reading frames in Gateway(TM) system entry vector (pDONR201).</title>
        <authorList>
            <person name="Ebert L."/>
            <person name="Schick M."/>
            <person name="Neubert P."/>
            <person name="Schatten R."/>
            <person name="Henze S."/>
            <person name="Korn B."/>
        </authorList>
    </citation>
    <scope>NUCLEOTIDE SEQUENCE [LARGE SCALE MRNA]</scope>
</reference>
<reference key="4">
    <citation type="journal article" date="2003" name="Nature">
        <title>The DNA sequence of human chromosome 7.</title>
        <authorList>
            <person name="Hillier L.W."/>
            <person name="Fulton R.S."/>
            <person name="Fulton L.A."/>
            <person name="Graves T.A."/>
            <person name="Pepin K.H."/>
            <person name="Wagner-McPherson C."/>
            <person name="Layman D."/>
            <person name="Maas J."/>
            <person name="Jaeger S."/>
            <person name="Walker R."/>
            <person name="Wylie K."/>
            <person name="Sekhon M."/>
            <person name="Becker M.C."/>
            <person name="O'Laughlin M.D."/>
            <person name="Schaller M.E."/>
            <person name="Fewell G.A."/>
            <person name="Delehaunty K.D."/>
            <person name="Miner T.L."/>
            <person name="Nash W.E."/>
            <person name="Cordes M."/>
            <person name="Du H."/>
            <person name="Sun H."/>
            <person name="Edwards J."/>
            <person name="Bradshaw-Cordum H."/>
            <person name="Ali J."/>
            <person name="Andrews S."/>
            <person name="Isak A."/>
            <person name="Vanbrunt A."/>
            <person name="Nguyen C."/>
            <person name="Du F."/>
            <person name="Lamar B."/>
            <person name="Courtney L."/>
            <person name="Kalicki J."/>
            <person name="Ozersky P."/>
            <person name="Bielicki L."/>
            <person name="Scott K."/>
            <person name="Holmes A."/>
            <person name="Harkins R."/>
            <person name="Harris A."/>
            <person name="Strong C.M."/>
            <person name="Hou S."/>
            <person name="Tomlinson C."/>
            <person name="Dauphin-Kohlberg S."/>
            <person name="Kozlowicz-Reilly A."/>
            <person name="Leonard S."/>
            <person name="Rohlfing T."/>
            <person name="Rock S.M."/>
            <person name="Tin-Wollam A.-M."/>
            <person name="Abbott A."/>
            <person name="Minx P."/>
            <person name="Maupin R."/>
            <person name="Strowmatt C."/>
            <person name="Latreille P."/>
            <person name="Miller N."/>
            <person name="Johnson D."/>
            <person name="Murray J."/>
            <person name="Woessner J.P."/>
            <person name="Wendl M.C."/>
            <person name="Yang S.-P."/>
            <person name="Schultz B.R."/>
            <person name="Wallis J.W."/>
            <person name="Spieth J."/>
            <person name="Bieri T.A."/>
            <person name="Nelson J.O."/>
            <person name="Berkowicz N."/>
            <person name="Wohldmann P.E."/>
            <person name="Cook L.L."/>
            <person name="Hickenbotham M.T."/>
            <person name="Eldred J."/>
            <person name="Williams D."/>
            <person name="Bedell J.A."/>
            <person name="Mardis E.R."/>
            <person name="Clifton S.W."/>
            <person name="Chissoe S.L."/>
            <person name="Marra M.A."/>
            <person name="Raymond C."/>
            <person name="Haugen E."/>
            <person name="Gillett W."/>
            <person name="Zhou Y."/>
            <person name="James R."/>
            <person name="Phelps K."/>
            <person name="Iadanoto S."/>
            <person name="Bubb K."/>
            <person name="Simms E."/>
            <person name="Levy R."/>
            <person name="Clendenning J."/>
            <person name="Kaul R."/>
            <person name="Kent W.J."/>
            <person name="Furey T.S."/>
            <person name="Baertsch R.A."/>
            <person name="Brent M.R."/>
            <person name="Keibler E."/>
            <person name="Flicek P."/>
            <person name="Bork P."/>
            <person name="Suyama M."/>
            <person name="Bailey J.A."/>
            <person name="Portnoy M.E."/>
            <person name="Torrents D."/>
            <person name="Chinwalla A.T."/>
            <person name="Gish W.R."/>
            <person name="Eddy S.R."/>
            <person name="McPherson J.D."/>
            <person name="Olson M.V."/>
            <person name="Eichler E.E."/>
            <person name="Green E.D."/>
            <person name="Waterston R.H."/>
            <person name="Wilson R.K."/>
        </authorList>
    </citation>
    <scope>NUCLEOTIDE SEQUENCE [LARGE SCALE GENOMIC DNA]</scope>
</reference>
<reference key="5">
    <citation type="submission" date="2005-07" db="EMBL/GenBank/DDBJ databases">
        <authorList>
            <person name="Mural R.J."/>
            <person name="Istrail S."/>
            <person name="Sutton G.G."/>
            <person name="Florea L."/>
            <person name="Halpern A.L."/>
            <person name="Mobarry C.M."/>
            <person name="Lippert R."/>
            <person name="Walenz B."/>
            <person name="Shatkay H."/>
            <person name="Dew I."/>
            <person name="Miller J.R."/>
            <person name="Flanigan M.J."/>
            <person name="Edwards N.J."/>
            <person name="Bolanos R."/>
            <person name="Fasulo D."/>
            <person name="Halldorsson B.V."/>
            <person name="Hannenhalli S."/>
            <person name="Turner R."/>
            <person name="Yooseph S."/>
            <person name="Lu F."/>
            <person name="Nusskern D.R."/>
            <person name="Shue B.C."/>
            <person name="Zheng X.H."/>
            <person name="Zhong F."/>
            <person name="Delcher A.L."/>
            <person name="Huson D.H."/>
            <person name="Kravitz S.A."/>
            <person name="Mouchard L."/>
            <person name="Reinert K."/>
            <person name="Remington K.A."/>
            <person name="Clark A.G."/>
            <person name="Waterman M.S."/>
            <person name="Eichler E.E."/>
            <person name="Adams M.D."/>
            <person name="Hunkapiller M.W."/>
            <person name="Myers E.W."/>
            <person name="Venter J.C."/>
        </authorList>
    </citation>
    <scope>NUCLEOTIDE SEQUENCE [LARGE SCALE GENOMIC DNA]</scope>
</reference>
<reference key="6">
    <citation type="journal article" date="2004" name="Genome Res.">
        <title>The status, quality, and expansion of the NIH full-length cDNA project: the Mammalian Gene Collection (MGC).</title>
        <authorList>
            <consortium name="The MGC Project Team"/>
        </authorList>
    </citation>
    <scope>NUCLEOTIDE SEQUENCE [LARGE SCALE MRNA]</scope>
    <source>
        <tissue>Eye</tissue>
    </source>
</reference>
<reference key="7">
    <citation type="journal article" date="2005" name="J. Biol. Chem.">
        <title>The mammalian YL1 protein is a shared subunit of the TRRAP/TIP60 histone acetyltransferase and SRCAP complexes.</title>
        <authorList>
            <person name="Cai Y."/>
            <person name="Jin J."/>
            <person name="Florens L."/>
            <person name="Swanson S.K."/>
            <person name="Kusch T."/>
            <person name="Li B."/>
            <person name="Workman J.L."/>
            <person name="Washburn M.P."/>
            <person name="Conaway R.C."/>
            <person name="Conaway J.W."/>
        </authorList>
    </citation>
    <scope>IDENTIFICATION IN THE SRCAP COMPLEX</scope>
    <scope>IDENTIFICATION BY MASS SPECTROMETRY</scope>
</reference>
<reference key="8">
    <citation type="journal article" date="2007" name="Cell Cycle">
        <title>p18(Hamlet) mediates different p53-dependent responses to DNA-damage inducing agents.</title>
        <authorList>
            <person name="Lafarga V."/>
            <person name="Cuadrado A."/>
            <person name="Nebreda A.R."/>
        </authorList>
    </citation>
    <scope>FUNCTION</scope>
</reference>
<reference key="9">
    <citation type="journal article" date="2007" name="EMBO J.">
        <title>A new p38 MAP kinase-regulated transcriptional coactivator that stimulates p53-dependent apoptosis.</title>
        <authorList>
            <person name="Cuadrado A."/>
            <person name="Lafarga V."/>
            <person name="Cheung P.C."/>
            <person name="Dolado I."/>
            <person name="Llanos S."/>
            <person name="Cohen P."/>
            <person name="Nebreda A.R."/>
        </authorList>
    </citation>
    <scope>FUNCTION</scope>
    <scope>INTERACTION WITH MAPK11 AND MAPK14</scope>
    <scope>PHOSPHORYLATION AT THR-103 BY MAPK11 AND MAPK14</scope>
    <scope>INDUCTION BY DNA DAMAGE</scope>
    <scope>MUTAGENESIS OF THR-103</scope>
</reference>
<reference key="10">
    <citation type="journal article" date="2007" name="FEBS J.">
        <title>A zinc finger HIT domain-containing protein, ZNHIT-1, interacts with orphan nuclear hormone receptor Rev-erbbeta and removes Rev-erbbeta-induced inhibition of apoCIII transcription.</title>
        <authorList>
            <person name="Wang J."/>
            <person name="Li Y."/>
            <person name="Zhang M."/>
            <person name="Liu Z."/>
            <person name="Wu C."/>
            <person name="Yuan H."/>
            <person name="Li Y.Y."/>
            <person name="Zhao X."/>
            <person name="Lu H."/>
        </authorList>
    </citation>
    <scope>FUNCTION</scope>
    <scope>INTERACTION WITH NR1D1 AND NR1D2</scope>
    <scope>SUBCELLULAR LOCATION</scope>
    <scope>TISSUE SPECIFICITY</scope>
    <scope>NUCLEAR LOCALIZATION SIGNAL</scope>
</reference>
<reference key="11">
    <citation type="journal article" date="2010" name="EMBO J.">
        <title>Essential role of p18Hamlet/SRCAP-mediated histone H2A.Z chromatin incorporation in muscle differentiation.</title>
        <authorList>
            <person name="Cuadrado A."/>
            <person name="Corrado N."/>
            <person name="Perdiguero E."/>
            <person name="Lafarga V."/>
            <person name="Munoz-Canoves P."/>
            <person name="Nebreda A.R."/>
        </authorList>
    </citation>
    <scope>FUNCTION</scope>
    <scope>IDENTIFICATION IN THE SRCAP COMPLEX</scope>
    <scope>INTERACTION WITH H2AZ1</scope>
    <scope>PHOSPHORYLATION</scope>
</reference>
<reference key="12">
    <citation type="journal article" date="2012" name="Proc. Natl. Acad. Sci. U.S.A.">
        <title>N-terminal acetylome analyses and functional insights of the N-terminal acetyltransferase NatB.</title>
        <authorList>
            <person name="Van Damme P."/>
            <person name="Lasa M."/>
            <person name="Polevoda B."/>
            <person name="Gazquez C."/>
            <person name="Elosegui-Artola A."/>
            <person name="Kim D.S."/>
            <person name="De Juan-Pardo E."/>
            <person name="Demeyer K."/>
            <person name="Hole K."/>
            <person name="Larrea E."/>
            <person name="Timmerman E."/>
            <person name="Prieto J."/>
            <person name="Arnesen T."/>
            <person name="Sherman F."/>
            <person name="Gevaert K."/>
            <person name="Aldabe R."/>
        </authorList>
    </citation>
    <scope>IDENTIFICATION BY MASS SPECTROMETRY [LARGE SCALE ANALYSIS]</scope>
</reference>
<reference key="13">
    <citation type="journal article" date="2017" name="Nat. Commun.">
        <title>R2TP/Prefoldin-like component RUVBL1/RUVBL2 directly interacts with ZNHIT2 to regulate assembly of U5 small nuclear ribonucleoprotein.</title>
        <authorList>
            <person name="Cloutier P."/>
            <person name="Poitras C."/>
            <person name="Durand M."/>
            <person name="Hekmat O."/>
            <person name="Fiola-Masson E."/>
            <person name="Bouchard A."/>
            <person name="Faubert D."/>
            <person name="Chabot B."/>
            <person name="Coulombe B."/>
        </authorList>
    </citation>
    <scope>INTERACTION WITH RUVBL1/RUVBL2 COMPLEX</scope>
</reference>
<reference key="14">
    <citation type="journal article" date="2022" name="Mol. Neurobiol.">
        <title>Gene Co-expression Analysis of the Human Substantia Nigra Identifies ZNHIT1 as an SNCA Co-expressed Gene that Protects Against alpha-Synuclein-Induced Impairments in Neurite Growth and Mitochondrial Dysfunction in SH-SY5Y Cells.</title>
        <authorList>
            <person name="McCarthy E."/>
            <person name="Barron A."/>
            <person name="Morales-Prieto N."/>
            <person name="Mazzocchi M."/>
            <person name="McCarthy C.M."/>
            <person name="Collins L.M."/>
            <person name="Sullivan A.M."/>
            <person name="O'Keeffe G.W."/>
        </authorList>
    </citation>
    <scope>FUNCTION</scope>
</reference>
<reference key="15">
    <citation type="journal article" date="2006" name="Science">
        <title>The consensus coding sequences of human breast and colorectal cancers.</title>
        <authorList>
            <person name="Sjoeblom T."/>
            <person name="Jones S."/>
            <person name="Wood L.D."/>
            <person name="Parsons D.W."/>
            <person name="Lin J."/>
            <person name="Barber T.D."/>
            <person name="Mandelker D."/>
            <person name="Leary R.J."/>
            <person name="Ptak J."/>
            <person name="Silliman N."/>
            <person name="Szabo S."/>
            <person name="Buckhaults P."/>
            <person name="Farrell C."/>
            <person name="Meeh P."/>
            <person name="Markowitz S.D."/>
            <person name="Willis J."/>
            <person name="Dawson D."/>
            <person name="Willson J.K.V."/>
            <person name="Gazdar A.F."/>
            <person name="Hartigan J."/>
            <person name="Wu L."/>
            <person name="Liu C."/>
            <person name="Parmigiani G."/>
            <person name="Park B.H."/>
            <person name="Bachman K.E."/>
            <person name="Papadopoulos N."/>
            <person name="Vogelstein B."/>
            <person name="Kinzler K.W."/>
            <person name="Velculescu V.E."/>
        </authorList>
    </citation>
    <scope>VARIANT [LARGE SCALE ANALYSIS] TRP-134</scope>
</reference>
<protein>
    <recommendedName>
        <fullName>Zinc finger HIT domain-containing protein 1</fullName>
    </recommendedName>
    <alternativeName>
        <fullName>Cyclin-G1-binding protein 1</fullName>
    </alternativeName>
    <alternativeName>
        <fullName>Zinc finger protein subfamily 4A member 1</fullName>
    </alternativeName>
    <alternativeName>
        <fullName evidence="13">p18 Hamlet</fullName>
    </alternativeName>
</protein>
<proteinExistence type="evidence at protein level"/>
<sequence length="154" mass="17536">MVEKKTSVRSQDPGQRRVLDRAARQRRINRQLEALENDNFQDDPHAGLPQLGKRLPQFDDDADTGKKKKKTRGDHFKLRFRKNFQALLEEQNLSVAEGPNYLTACAGPPSRPQRPFCAVCGFPSPYTCVSCGARYCTVRCLGTHQETRCLKWTV</sequence>
<organism>
    <name type="scientific">Homo sapiens</name>
    <name type="common">Human</name>
    <dbReference type="NCBI Taxonomy" id="9606"/>
    <lineage>
        <taxon>Eukaryota</taxon>
        <taxon>Metazoa</taxon>
        <taxon>Chordata</taxon>
        <taxon>Craniata</taxon>
        <taxon>Vertebrata</taxon>
        <taxon>Euteleostomi</taxon>
        <taxon>Mammalia</taxon>
        <taxon>Eutheria</taxon>
        <taxon>Euarchontoglires</taxon>
        <taxon>Primates</taxon>
        <taxon>Haplorrhini</taxon>
        <taxon>Catarrhini</taxon>
        <taxon>Hominidae</taxon>
        <taxon>Homo</taxon>
    </lineage>
</organism>